<evidence type="ECO:0000255" key="1">
    <source>
        <dbReference type="HAMAP-Rule" id="MF_00274"/>
    </source>
</evidence>
<evidence type="ECO:0000269" key="2">
    <source>
    </source>
</evidence>
<evidence type="ECO:0000305" key="3"/>
<reference key="1">
    <citation type="submission" date="1998-11" db="EMBL/GenBank/DDBJ databases">
        <title>Repair of interstrand cross-links in DNA and recR mutation of Deinococcus radiodurans.</title>
        <authorList>
            <person name="Kitayama S."/>
            <person name="Narumi I."/>
            <person name="Kikuchi M."/>
            <person name="Watanabe H."/>
        </authorList>
    </citation>
    <scope>NUCLEOTIDE SEQUENCE [GENOMIC DNA]</scope>
    <source>
        <strain>ATCC 13939 / DSM 20539 / JCM 16871 / CCUG 27074 / LMG 4051 / NBRC 15346 / NCIMB 9279 / VKM B-1422 / R1</strain>
    </source>
</reference>
<reference key="2">
    <citation type="journal article" date="1999" name="Science">
        <title>Genome sequence of the radioresistant bacterium Deinococcus radiodurans R1.</title>
        <authorList>
            <person name="White O."/>
            <person name="Eisen J.A."/>
            <person name="Heidelberg J.F."/>
            <person name="Hickey E.K."/>
            <person name="Peterson J.D."/>
            <person name="Dodson R.J."/>
            <person name="Haft D.H."/>
            <person name="Gwinn M.L."/>
            <person name="Nelson W.C."/>
            <person name="Richardson D.L."/>
            <person name="Moffat K.S."/>
            <person name="Qin H."/>
            <person name="Jiang L."/>
            <person name="Pamphile W."/>
            <person name="Crosby M."/>
            <person name="Shen M."/>
            <person name="Vamathevan J.J."/>
            <person name="Lam P."/>
            <person name="McDonald L.A."/>
            <person name="Utterback T.R."/>
            <person name="Zalewski C."/>
            <person name="Makarova K.S."/>
            <person name="Aravind L."/>
            <person name="Daly M.J."/>
            <person name="Minton K.W."/>
            <person name="Fleischmann R.D."/>
            <person name="Ketchum K.A."/>
            <person name="Nelson K.E."/>
            <person name="Salzberg S.L."/>
            <person name="Smith H.O."/>
            <person name="Venter J.C."/>
            <person name="Fraser C.M."/>
        </authorList>
    </citation>
    <scope>NUCLEOTIDE SEQUENCE [LARGE SCALE GENOMIC DNA]</scope>
    <source>
        <strain>ATCC 13939 / DSM 20539 / JCM 16871 / CCUG 27074 / LMG 4051 / NBRC 15346 / NCIMB 9279 / VKM B-1422 / R1</strain>
    </source>
</reference>
<reference key="3">
    <citation type="journal article" date="2012" name="Microbiology">
        <title>Genetic and biochemical characteristics of the histone-like protein DR0199 in Deinococcus radiodurans.</title>
        <authorList>
            <person name="Wang H."/>
            <person name="Wang F."/>
            <person name="Hua X."/>
            <person name="Ma T."/>
            <person name="Chen J."/>
            <person name="Xu X."/>
            <person name="Wang L."/>
            <person name="Tian B."/>
            <person name="Hua Y."/>
        </authorList>
    </citation>
    <scope>FUNCTION</scope>
    <scope>DNA-BINDING</scope>
    <scope>SUBCELLULAR LOCATION</scope>
    <scope>DISRUPTION PHENOTYPE</scope>
    <source>
        <strain>ATCC 13939 / DSM 20539 / JCM 16871 / CCUG 27074 / LMG 4051 / NBRC 15346 / NCIMB 9279 / VKM B-1422 / R1</strain>
    </source>
</reference>
<feature type="chain" id="PRO_0000170390" description="Nucleoid-associated protein DR_0199">
    <location>
        <begin position="1"/>
        <end position="96"/>
    </location>
</feature>
<feature type="sequence conflict" description="In Ref. 1; BAA34649." evidence="3" ref="1">
    <original>TAGLGLPGF</original>
    <variation>RRAWDCPAFECDRAGAWSSEGQTV</variation>
    <location>
        <begin position="88"/>
        <end position="96"/>
    </location>
</feature>
<sequence length="96" mass="10006">MDMKKLMKQMQQAQVAAGKIQDELAAQSVEGTASGLVTVQMNGHGKVTSLKIKPEAVDGDDVEALEDLILAAINDAAEKAEGLQREATAGLGLPGF</sequence>
<proteinExistence type="evidence at protein level"/>
<comment type="function">
    <text evidence="1 2">Binds to DNA and alters its conformation. May be involved in regulation of gene expression, nucleoid organization and DNA protection.</text>
</comment>
<comment type="subunit">
    <text evidence="1">Homodimer.</text>
</comment>
<comment type="subcellular location">
    <subcellularLocation>
        <location evidence="1 2">Cytoplasm</location>
        <location evidence="1 2">Nucleoid</location>
    </subcellularLocation>
</comment>
<comment type="disruption phenotype">
    <text evidence="2">Mutants display an increased sensitivity to oxidative stress, and a slightly increased sensitivity to ionizing radiation and UV exposure.</text>
</comment>
<comment type="similarity">
    <text evidence="1">Belongs to the YbaB/EbfC family.</text>
</comment>
<organism>
    <name type="scientific">Deinococcus radiodurans (strain ATCC 13939 / DSM 20539 / JCM 16871 / CCUG 27074 / LMG 4051 / NBRC 15346 / NCIMB 9279 / VKM B-1422 / R1)</name>
    <dbReference type="NCBI Taxonomy" id="243230"/>
    <lineage>
        <taxon>Bacteria</taxon>
        <taxon>Thermotogati</taxon>
        <taxon>Deinococcota</taxon>
        <taxon>Deinococci</taxon>
        <taxon>Deinococcales</taxon>
        <taxon>Deinococcaceae</taxon>
        <taxon>Deinococcus</taxon>
    </lineage>
</organism>
<dbReference type="EMBL" id="AB020241">
    <property type="protein sequence ID" value="BAA34649.1"/>
    <property type="molecule type" value="Genomic_DNA"/>
</dbReference>
<dbReference type="EMBL" id="AE000513">
    <property type="protein sequence ID" value="AAF09786.1"/>
    <property type="molecule type" value="Genomic_DNA"/>
</dbReference>
<dbReference type="PIR" id="A75548">
    <property type="entry name" value="A75548"/>
</dbReference>
<dbReference type="RefSeq" id="NP_293923.1">
    <property type="nucleotide sequence ID" value="NC_001263.1"/>
</dbReference>
<dbReference type="RefSeq" id="WP_010886845.1">
    <property type="nucleotide sequence ID" value="NC_001263.1"/>
</dbReference>
<dbReference type="SMR" id="Q9RXV7"/>
<dbReference type="FunCoup" id="Q9RXV7">
    <property type="interactions" value="227"/>
</dbReference>
<dbReference type="STRING" id="243230.DR_0199"/>
<dbReference type="PaxDb" id="243230-DR_0199"/>
<dbReference type="EnsemblBacteria" id="AAF09786">
    <property type="protein sequence ID" value="AAF09786"/>
    <property type="gene ID" value="DR_0199"/>
</dbReference>
<dbReference type="GeneID" id="69516430"/>
<dbReference type="KEGG" id="dra:DR_0199"/>
<dbReference type="PATRIC" id="fig|243230.17.peg.363"/>
<dbReference type="eggNOG" id="COG0718">
    <property type="taxonomic scope" value="Bacteria"/>
</dbReference>
<dbReference type="HOGENOM" id="CLU_140930_2_2_0"/>
<dbReference type="InParanoid" id="Q9RXV7"/>
<dbReference type="OrthoDB" id="9795263at2"/>
<dbReference type="Proteomes" id="UP000002524">
    <property type="component" value="Chromosome 1"/>
</dbReference>
<dbReference type="GO" id="GO:0043590">
    <property type="term" value="C:bacterial nucleoid"/>
    <property type="evidence" value="ECO:0007669"/>
    <property type="project" value="UniProtKB-UniRule"/>
</dbReference>
<dbReference type="GO" id="GO:0005829">
    <property type="term" value="C:cytosol"/>
    <property type="evidence" value="ECO:0000318"/>
    <property type="project" value="GO_Central"/>
</dbReference>
<dbReference type="GO" id="GO:0003677">
    <property type="term" value="F:DNA binding"/>
    <property type="evidence" value="ECO:0000318"/>
    <property type="project" value="GO_Central"/>
</dbReference>
<dbReference type="Gene3D" id="3.30.1310.10">
    <property type="entry name" value="Nucleoid-associated protein YbaB-like domain"/>
    <property type="match status" value="1"/>
</dbReference>
<dbReference type="HAMAP" id="MF_00274">
    <property type="entry name" value="DNA_YbaB_EbfC"/>
    <property type="match status" value="1"/>
</dbReference>
<dbReference type="InterPro" id="IPR036894">
    <property type="entry name" value="YbaB-like_sf"/>
</dbReference>
<dbReference type="InterPro" id="IPR004401">
    <property type="entry name" value="YbaB/EbfC"/>
</dbReference>
<dbReference type="NCBIfam" id="TIGR00103">
    <property type="entry name" value="DNA_YbaB_EbfC"/>
    <property type="match status" value="1"/>
</dbReference>
<dbReference type="PANTHER" id="PTHR33449">
    <property type="entry name" value="NUCLEOID-ASSOCIATED PROTEIN YBAB"/>
    <property type="match status" value="1"/>
</dbReference>
<dbReference type="PANTHER" id="PTHR33449:SF1">
    <property type="entry name" value="NUCLEOID-ASSOCIATED PROTEIN YBAB"/>
    <property type="match status" value="1"/>
</dbReference>
<dbReference type="Pfam" id="PF02575">
    <property type="entry name" value="YbaB_DNA_bd"/>
    <property type="match status" value="1"/>
</dbReference>
<dbReference type="PIRSF" id="PIRSF004555">
    <property type="entry name" value="UCP004555"/>
    <property type="match status" value="1"/>
</dbReference>
<dbReference type="SUPFAM" id="SSF82607">
    <property type="entry name" value="YbaB-like"/>
    <property type="match status" value="1"/>
</dbReference>
<protein>
    <recommendedName>
        <fullName evidence="1">Nucleoid-associated protein DR_0199</fullName>
    </recommendedName>
</protein>
<accession>Q9RXV7</accession>
<accession>Q9ZNA1</accession>
<gene>
    <name type="ordered locus">DR_0199</name>
</gene>
<keyword id="KW-0963">Cytoplasm</keyword>
<keyword id="KW-0238">DNA-binding</keyword>
<keyword id="KW-1185">Reference proteome</keyword>
<name>Y199_DEIRA</name>